<gene>
    <name type="primary">rihB</name>
    <name type="ordered locus">SBO_2165</name>
</gene>
<sequence>MRKQIVADNIHGETGLDGPVFESLTRQAESTHAVKYIIDTLMASDGDITLVPVGPLSNIAVAMRMQPAILPKIREIVLMGGAYGTGNFTPSAEFNIFADPEAARVVFTSGVPLVMIGLDLTNQTVCTPDVIARMERAGGPAGELFSDIMNFTLKTQFENYGLAGGPVHDATCIGYLINPDGIKTQEMYVEVDVNSGPCYGRTVCDELGVLGKPANTKVGITIDTDWFWGLVEECVRGYIKTH</sequence>
<organism>
    <name type="scientific">Shigella boydii serotype 4 (strain Sb227)</name>
    <dbReference type="NCBI Taxonomy" id="300268"/>
    <lineage>
        <taxon>Bacteria</taxon>
        <taxon>Pseudomonadati</taxon>
        <taxon>Pseudomonadota</taxon>
        <taxon>Gammaproteobacteria</taxon>
        <taxon>Enterobacterales</taxon>
        <taxon>Enterobacteriaceae</taxon>
        <taxon>Shigella</taxon>
    </lineage>
</organism>
<reference key="1">
    <citation type="journal article" date="2005" name="Nucleic Acids Res.">
        <title>Genome dynamics and diversity of Shigella species, the etiologic agents of bacillary dysentery.</title>
        <authorList>
            <person name="Yang F."/>
            <person name="Yang J."/>
            <person name="Zhang X."/>
            <person name="Chen L."/>
            <person name="Jiang Y."/>
            <person name="Yan Y."/>
            <person name="Tang X."/>
            <person name="Wang J."/>
            <person name="Xiong Z."/>
            <person name="Dong J."/>
            <person name="Xue Y."/>
            <person name="Zhu Y."/>
            <person name="Xu X."/>
            <person name="Sun L."/>
            <person name="Chen S."/>
            <person name="Nie H."/>
            <person name="Peng J."/>
            <person name="Xu J."/>
            <person name="Wang Y."/>
            <person name="Yuan Z."/>
            <person name="Wen Y."/>
            <person name="Yao Z."/>
            <person name="Shen Y."/>
            <person name="Qiang B."/>
            <person name="Hou Y."/>
            <person name="Yu J."/>
            <person name="Jin Q."/>
        </authorList>
    </citation>
    <scope>NUCLEOTIDE SEQUENCE [LARGE SCALE GENOMIC DNA]</scope>
    <source>
        <strain>Sb227</strain>
    </source>
</reference>
<accession>Q31YW9</accession>
<name>RIHB_SHIBS</name>
<comment type="catalytic activity">
    <reaction>
        <text>a pyrimidine ribonucleoside + H2O = a pyrimidine nucleobase + D-ribose</text>
        <dbReference type="Rhea" id="RHEA:56816"/>
        <dbReference type="ChEBI" id="CHEBI:15377"/>
        <dbReference type="ChEBI" id="CHEBI:26432"/>
        <dbReference type="ChEBI" id="CHEBI:47013"/>
        <dbReference type="ChEBI" id="CHEBI:141014"/>
        <dbReference type="EC" id="3.2.2.8"/>
    </reaction>
</comment>
<comment type="similarity">
    <text evidence="2">Belongs to the IUNH family. RihB subfamily.</text>
</comment>
<comment type="caution">
    <text evidence="2">This sequence is 71 amino acid shorter than orthologs and therefore lacks two conserved residues involved in calcium binding and active site activity. The two other residues involved in calcium binding are present but it is not known if they still bind calcium.</text>
</comment>
<protein>
    <recommendedName>
        <fullName>Putative pyrimidine-specific ribonucleoside hydrolase RihB</fullName>
        <ecNumber>3.2.2.8</ecNumber>
    </recommendedName>
    <alternativeName>
        <fullName>Cytidine/uridine-specific hydrolase</fullName>
    </alternativeName>
</protein>
<keyword id="KW-0326">Glycosidase</keyword>
<keyword id="KW-0378">Hydrolase</keyword>
<proteinExistence type="inferred from homology"/>
<evidence type="ECO:0000250" key="1"/>
<evidence type="ECO:0000305" key="2"/>
<feature type="chain" id="PRO_0000206827" description="Putative pyrimidine-specific ribonucleoside hydrolase RihB">
    <location>
        <begin position="1"/>
        <end position="242"/>
    </location>
</feature>
<feature type="binding site" evidence="1">
    <location>
        <position position="156"/>
    </location>
    <ligand>
        <name>substrate</name>
    </ligand>
</feature>
<feature type="binding site" evidence="1">
    <location>
        <position position="168"/>
    </location>
    <ligand>
        <name>substrate</name>
    </ligand>
</feature>
<dbReference type="EC" id="3.2.2.8"/>
<dbReference type="EMBL" id="CP000036">
    <property type="protein sequence ID" value="ABB66739.1"/>
    <property type="molecule type" value="Genomic_DNA"/>
</dbReference>
<dbReference type="SMR" id="Q31YW9"/>
<dbReference type="KEGG" id="sbo:SBO_2165"/>
<dbReference type="HOGENOM" id="CLU_036838_2_2_6"/>
<dbReference type="Proteomes" id="UP000007067">
    <property type="component" value="Chromosome"/>
</dbReference>
<dbReference type="GO" id="GO:0005829">
    <property type="term" value="C:cytosol"/>
    <property type="evidence" value="ECO:0007669"/>
    <property type="project" value="TreeGrafter"/>
</dbReference>
<dbReference type="GO" id="GO:0008477">
    <property type="term" value="F:purine nucleosidase activity"/>
    <property type="evidence" value="ECO:0007669"/>
    <property type="project" value="TreeGrafter"/>
</dbReference>
<dbReference type="GO" id="GO:0050263">
    <property type="term" value="F:ribosylpyrimidine nucleosidase activity"/>
    <property type="evidence" value="ECO:0007669"/>
    <property type="project" value="UniProtKB-EC"/>
</dbReference>
<dbReference type="GO" id="GO:0006152">
    <property type="term" value="P:purine nucleoside catabolic process"/>
    <property type="evidence" value="ECO:0007669"/>
    <property type="project" value="TreeGrafter"/>
</dbReference>
<dbReference type="CDD" id="cd02651">
    <property type="entry name" value="nuc_hydro_IU_UC_XIUA"/>
    <property type="match status" value="1"/>
</dbReference>
<dbReference type="Gene3D" id="3.90.245.10">
    <property type="entry name" value="Ribonucleoside hydrolase-like"/>
    <property type="match status" value="1"/>
</dbReference>
<dbReference type="InterPro" id="IPR001910">
    <property type="entry name" value="Inosine/uridine_hydrolase_dom"/>
</dbReference>
<dbReference type="InterPro" id="IPR023186">
    <property type="entry name" value="IUNH"/>
</dbReference>
<dbReference type="InterPro" id="IPR036452">
    <property type="entry name" value="Ribo_hydro-like"/>
</dbReference>
<dbReference type="NCBIfam" id="NF007417">
    <property type="entry name" value="PRK09955.1"/>
    <property type="match status" value="1"/>
</dbReference>
<dbReference type="PANTHER" id="PTHR12304">
    <property type="entry name" value="INOSINE-URIDINE PREFERRING NUCLEOSIDE HYDROLASE"/>
    <property type="match status" value="1"/>
</dbReference>
<dbReference type="PANTHER" id="PTHR12304:SF4">
    <property type="entry name" value="URIDINE NUCLEOSIDASE"/>
    <property type="match status" value="1"/>
</dbReference>
<dbReference type="Pfam" id="PF01156">
    <property type="entry name" value="IU_nuc_hydro"/>
    <property type="match status" value="1"/>
</dbReference>
<dbReference type="SUPFAM" id="SSF53590">
    <property type="entry name" value="Nucleoside hydrolase"/>
    <property type="match status" value="1"/>
</dbReference>